<gene>
    <name type="primary">SUS2</name>
</gene>
<reference key="1">
    <citation type="online journal article" date="1998" name="Plant Gene Register">
        <title>Cloning and characterization of a cDNA encoding a second sucrose synthase gene in pea (Pisum sativum L.).</title>
        <authorList>
            <person name="Buchner P."/>
            <person name="Poret M."/>
            <person name="Rochat C."/>
        </authorList>
        <locator>PGR98-105</locator>
    </citation>
    <scope>NUCLEOTIDE SEQUENCE [MRNA]</scope>
    <source>
        <strain>cv. Frisson</strain>
        <tissue>Seed coat</tissue>
    </source>
</reference>
<keyword id="KW-0328">Glycosyltransferase</keyword>
<keyword id="KW-0808">Transferase</keyword>
<evidence type="ECO:0000250" key="1">
    <source>
        <dbReference type="UniProtKB" id="P49040"/>
    </source>
</evidence>
<evidence type="ECO:0000305" key="2"/>
<comment type="function">
    <text>Sucrose-cleaving enzyme that provides UDP-glucose and fructose for various metabolic pathways.</text>
</comment>
<comment type="catalytic activity">
    <reaction>
        <text>an NDP-alpha-D-glucose + D-fructose = a ribonucleoside 5'-diphosphate + sucrose + H(+)</text>
        <dbReference type="Rhea" id="RHEA:16241"/>
        <dbReference type="ChEBI" id="CHEBI:15378"/>
        <dbReference type="ChEBI" id="CHEBI:17992"/>
        <dbReference type="ChEBI" id="CHEBI:37721"/>
        <dbReference type="ChEBI" id="CHEBI:57930"/>
        <dbReference type="ChEBI" id="CHEBI:76533"/>
        <dbReference type="EC" id="2.4.1.13"/>
    </reaction>
</comment>
<comment type="similarity">
    <text evidence="2">Belongs to the glycosyltransferase 1 family. Plant sucrose synthase subfamily.</text>
</comment>
<sequence length="809" mass="92208">MSTHPKFTRVPSIRDRVQDTLSAHRNELISLLSRYVAQGKGILQPHNLIDELDNILGEDHATLDLKNGPFGQIINSAQEAIVLPPFVAIAVRPRPGVWEYVRVNVFELSVEQLSVSEYLSFKEELVEGKSNDNIILELDLEPFNASFPRPTRSSSIGNGVQFLNRHLSSNMFRNKDCLEPLLDFLRVHTYKGHALMLNDRIQSISKLQSALVKAEDHLSKLAPDTLYSEFEYELQGTGFERGWGDTAARVLEMMHLLLDILQAPDPSTLETFLGRVPMVFNVVILSPHGFFGQANVLGLPDTGGQVVYILDQVRALESEMLVRIKKQGLDFTPRILIVTRLIPDAKGTTCNQRLERVSGTEYTHILRVPFRSEKGILRKWISRFDVWPFLETFAEDVASEIAAELQCYPDFIIGNYSDGNLVASLLAYKMGVTQCTIAHALEKTKYPDSDIYWKKFEDKYHFSCQFTADLIAMNNADFIITSTYQEIAGTKNTIGQYESHTAFTLPGLYRVVHGIDVFDPKFNIVSPGADMTIYFPYSDKEKRLTALHSSIEKLLYGTEQTDEYIGSLTDRSKPIIFSMARLDRVKNITGLVESYAKNSKLRELVNLVVVAGYIDVKKSSDREEIEEIEKMHDLMKQYNLNGEFRWITAQTNRARNGELYRYIADTKGAFVQPAFYEAFGLTVVEAMTCGLPTFATNHGGPAEIIEHGVSGFHIDPYHPDQASELLVDFFQRCKEDPNHWNKVSDGGLQRIYERYTWKIYSERLMTLAGVYSFWKYVSKLERRETRRYLEMFYILKFRDLANSVPIAKG</sequence>
<organism>
    <name type="scientific">Pisum sativum</name>
    <name type="common">Garden pea</name>
    <name type="synonym">Lathyrus oleraceus</name>
    <dbReference type="NCBI Taxonomy" id="3888"/>
    <lineage>
        <taxon>Eukaryota</taxon>
        <taxon>Viridiplantae</taxon>
        <taxon>Streptophyta</taxon>
        <taxon>Embryophyta</taxon>
        <taxon>Tracheophyta</taxon>
        <taxon>Spermatophyta</taxon>
        <taxon>Magnoliopsida</taxon>
        <taxon>eudicotyledons</taxon>
        <taxon>Gunneridae</taxon>
        <taxon>Pentapetalae</taxon>
        <taxon>rosids</taxon>
        <taxon>fabids</taxon>
        <taxon>Fabales</taxon>
        <taxon>Fabaceae</taxon>
        <taxon>Papilionoideae</taxon>
        <taxon>50 kb inversion clade</taxon>
        <taxon>NPAAA clade</taxon>
        <taxon>Hologalegina</taxon>
        <taxon>IRL clade</taxon>
        <taxon>Fabeae</taxon>
        <taxon>Pisum</taxon>
    </lineage>
</organism>
<dbReference type="EC" id="2.4.1.13"/>
<dbReference type="EMBL" id="AJ001071">
    <property type="protein sequence ID" value="CAA04512.1"/>
    <property type="molecule type" value="mRNA"/>
</dbReference>
<dbReference type="PIR" id="T06497">
    <property type="entry name" value="T06497"/>
</dbReference>
<dbReference type="SMR" id="O24301"/>
<dbReference type="CAZy" id="GT4">
    <property type="family name" value="Glycosyltransferase Family 4"/>
</dbReference>
<dbReference type="BRENDA" id="2.4.1.13">
    <property type="organism ID" value="4872"/>
</dbReference>
<dbReference type="SABIO-RK" id="O24301"/>
<dbReference type="GO" id="GO:0016157">
    <property type="term" value="F:sucrose synthase activity"/>
    <property type="evidence" value="ECO:0007669"/>
    <property type="project" value="UniProtKB-EC"/>
</dbReference>
<dbReference type="GO" id="GO:0005985">
    <property type="term" value="P:sucrose metabolic process"/>
    <property type="evidence" value="ECO:0007669"/>
    <property type="project" value="InterPro"/>
</dbReference>
<dbReference type="FunFam" id="1.20.120.1230:FF:000001">
    <property type="entry name" value="Sucrose synthase"/>
    <property type="match status" value="1"/>
</dbReference>
<dbReference type="FunFam" id="3.10.450.330:FF:000001">
    <property type="entry name" value="Sucrose synthase"/>
    <property type="match status" value="1"/>
</dbReference>
<dbReference type="FunFam" id="3.40.50.2000:FF:000004">
    <property type="entry name" value="Sucrose synthase"/>
    <property type="match status" value="1"/>
</dbReference>
<dbReference type="Gene3D" id="1.20.120.1230">
    <property type="match status" value="1"/>
</dbReference>
<dbReference type="Gene3D" id="3.10.450.330">
    <property type="match status" value="1"/>
</dbReference>
<dbReference type="Gene3D" id="3.40.50.2000">
    <property type="entry name" value="Glycogen Phosphorylase B"/>
    <property type="match status" value="2"/>
</dbReference>
<dbReference type="InterPro" id="IPR001296">
    <property type="entry name" value="Glyco_trans_1"/>
</dbReference>
<dbReference type="InterPro" id="IPR000368">
    <property type="entry name" value="Sucrose_synth_GT-B1"/>
</dbReference>
<dbReference type="InterPro" id="IPR012820">
    <property type="entry name" value="Sucrose_synthase_pln/cyn"/>
</dbReference>
<dbReference type="InterPro" id="IPR056736">
    <property type="entry name" value="SUS_EPBD"/>
</dbReference>
<dbReference type="InterPro" id="IPR056735">
    <property type="entry name" value="SUS_N"/>
</dbReference>
<dbReference type="NCBIfam" id="TIGR02470">
    <property type="entry name" value="sucr_synth"/>
    <property type="match status" value="1"/>
</dbReference>
<dbReference type="PANTHER" id="PTHR45839">
    <property type="match status" value="1"/>
</dbReference>
<dbReference type="PANTHER" id="PTHR45839:SF22">
    <property type="entry name" value="SUCROSE SYNTHASE"/>
    <property type="match status" value="1"/>
</dbReference>
<dbReference type="Pfam" id="PF00534">
    <property type="entry name" value="Glycos_transf_1"/>
    <property type="match status" value="1"/>
</dbReference>
<dbReference type="Pfam" id="PF00862">
    <property type="entry name" value="GT-B_Sucrose_synth"/>
    <property type="match status" value="1"/>
</dbReference>
<dbReference type="Pfam" id="PF24862">
    <property type="entry name" value="SUS_EPBD"/>
    <property type="match status" value="1"/>
</dbReference>
<dbReference type="Pfam" id="PF24861">
    <property type="entry name" value="SUS_N"/>
    <property type="match status" value="1"/>
</dbReference>
<dbReference type="SUPFAM" id="SSF53756">
    <property type="entry name" value="UDP-Glycosyltransferase/glycogen phosphorylase"/>
    <property type="match status" value="1"/>
</dbReference>
<name>SUS2_PEA</name>
<feature type="chain" id="PRO_0000204658" description="Sucrose synthase 2">
    <location>
        <begin position="1"/>
        <end position="809"/>
    </location>
</feature>
<feature type="region of interest" description="GT-B glycosyltransferase" evidence="1">
    <location>
        <begin position="278"/>
        <end position="756"/>
    </location>
</feature>
<accession>O24301</accession>
<protein>
    <recommendedName>
        <fullName>Sucrose synthase 2</fullName>
        <ecNumber>2.4.1.13</ecNumber>
    </recommendedName>
    <alternativeName>
        <fullName>Sucrose-UDP glucosyltransferase 2</fullName>
    </alternativeName>
</protein>
<proteinExistence type="evidence at transcript level"/>